<name>ACCD_NOSS1</name>
<evidence type="ECO:0000255" key="1">
    <source>
        <dbReference type="HAMAP-Rule" id="MF_01395"/>
    </source>
</evidence>
<evidence type="ECO:0000255" key="2">
    <source>
        <dbReference type="PROSITE-ProRule" id="PRU01136"/>
    </source>
</evidence>
<organism>
    <name type="scientific">Nostoc sp. (strain PCC 7120 / SAG 25.82 / UTEX 2576)</name>
    <dbReference type="NCBI Taxonomy" id="103690"/>
    <lineage>
        <taxon>Bacteria</taxon>
        <taxon>Bacillati</taxon>
        <taxon>Cyanobacteriota</taxon>
        <taxon>Cyanophyceae</taxon>
        <taxon>Nostocales</taxon>
        <taxon>Nostocaceae</taxon>
        <taxon>Nostoc</taxon>
    </lineage>
</organism>
<accession>Q8YUI2</accession>
<gene>
    <name evidence="1" type="primary">accD</name>
    <name type="ordered locus">all2364</name>
</gene>
<keyword id="KW-0067">ATP-binding</keyword>
<keyword id="KW-0963">Cytoplasm</keyword>
<keyword id="KW-0275">Fatty acid biosynthesis</keyword>
<keyword id="KW-0276">Fatty acid metabolism</keyword>
<keyword id="KW-0444">Lipid biosynthesis</keyword>
<keyword id="KW-0443">Lipid metabolism</keyword>
<keyword id="KW-0479">Metal-binding</keyword>
<keyword id="KW-0547">Nucleotide-binding</keyword>
<keyword id="KW-1185">Reference proteome</keyword>
<keyword id="KW-0808">Transferase</keyword>
<keyword id="KW-0862">Zinc</keyword>
<keyword id="KW-0863">Zinc-finger</keyword>
<reference key="1">
    <citation type="journal article" date="2001" name="DNA Res.">
        <title>Complete genomic sequence of the filamentous nitrogen-fixing cyanobacterium Anabaena sp. strain PCC 7120.</title>
        <authorList>
            <person name="Kaneko T."/>
            <person name="Nakamura Y."/>
            <person name="Wolk C.P."/>
            <person name="Kuritz T."/>
            <person name="Sasamoto S."/>
            <person name="Watanabe A."/>
            <person name="Iriguchi M."/>
            <person name="Ishikawa A."/>
            <person name="Kawashima K."/>
            <person name="Kimura T."/>
            <person name="Kishida Y."/>
            <person name="Kohara M."/>
            <person name="Matsumoto M."/>
            <person name="Matsuno A."/>
            <person name="Muraki A."/>
            <person name="Nakazaki N."/>
            <person name="Shimpo S."/>
            <person name="Sugimoto M."/>
            <person name="Takazawa M."/>
            <person name="Yamada M."/>
            <person name="Yasuda M."/>
            <person name="Tabata S."/>
        </authorList>
    </citation>
    <scope>NUCLEOTIDE SEQUENCE [LARGE SCALE GENOMIC DNA]</scope>
    <source>
        <strain>PCC 7120 / SAG 25.82 / UTEX 2576</strain>
    </source>
</reference>
<dbReference type="EC" id="2.1.3.15" evidence="1"/>
<dbReference type="EMBL" id="BA000019">
    <property type="protein sequence ID" value="BAB74063.1"/>
    <property type="molecule type" value="Genomic_DNA"/>
</dbReference>
<dbReference type="PIR" id="AE2101">
    <property type="entry name" value="AE2101"/>
</dbReference>
<dbReference type="RefSeq" id="WP_010996520.1">
    <property type="nucleotide sequence ID" value="NZ_RSCN01000004.1"/>
</dbReference>
<dbReference type="SMR" id="Q8YUI2"/>
<dbReference type="STRING" id="103690.gene:10494394"/>
<dbReference type="KEGG" id="ana:all2364"/>
<dbReference type="eggNOG" id="COG0777">
    <property type="taxonomic scope" value="Bacteria"/>
</dbReference>
<dbReference type="OrthoDB" id="9772975at2"/>
<dbReference type="UniPathway" id="UPA00655">
    <property type="reaction ID" value="UER00711"/>
</dbReference>
<dbReference type="Proteomes" id="UP000002483">
    <property type="component" value="Chromosome"/>
</dbReference>
<dbReference type="GO" id="GO:0009317">
    <property type="term" value="C:acetyl-CoA carboxylase complex"/>
    <property type="evidence" value="ECO:0007669"/>
    <property type="project" value="InterPro"/>
</dbReference>
<dbReference type="GO" id="GO:0003989">
    <property type="term" value="F:acetyl-CoA carboxylase activity"/>
    <property type="evidence" value="ECO:0007669"/>
    <property type="project" value="InterPro"/>
</dbReference>
<dbReference type="GO" id="GO:0005524">
    <property type="term" value="F:ATP binding"/>
    <property type="evidence" value="ECO:0007669"/>
    <property type="project" value="UniProtKB-KW"/>
</dbReference>
<dbReference type="GO" id="GO:0016743">
    <property type="term" value="F:carboxyl- or carbamoyltransferase activity"/>
    <property type="evidence" value="ECO:0007669"/>
    <property type="project" value="UniProtKB-UniRule"/>
</dbReference>
<dbReference type="GO" id="GO:0008270">
    <property type="term" value="F:zinc ion binding"/>
    <property type="evidence" value="ECO:0007669"/>
    <property type="project" value="UniProtKB-UniRule"/>
</dbReference>
<dbReference type="GO" id="GO:0006633">
    <property type="term" value="P:fatty acid biosynthetic process"/>
    <property type="evidence" value="ECO:0007669"/>
    <property type="project" value="UniProtKB-KW"/>
</dbReference>
<dbReference type="GO" id="GO:2001295">
    <property type="term" value="P:malonyl-CoA biosynthetic process"/>
    <property type="evidence" value="ECO:0007669"/>
    <property type="project" value="UniProtKB-UniRule"/>
</dbReference>
<dbReference type="Gene3D" id="3.90.226.10">
    <property type="entry name" value="2-enoyl-CoA Hydratase, Chain A, domain 1"/>
    <property type="match status" value="1"/>
</dbReference>
<dbReference type="HAMAP" id="MF_01395">
    <property type="entry name" value="AcetylCoA_CT_beta"/>
    <property type="match status" value="1"/>
</dbReference>
<dbReference type="InterPro" id="IPR034733">
    <property type="entry name" value="AcCoA_carboxyl_beta"/>
</dbReference>
<dbReference type="InterPro" id="IPR000438">
    <property type="entry name" value="Acetyl_CoA_COase_Trfase_b_su"/>
</dbReference>
<dbReference type="InterPro" id="IPR029045">
    <property type="entry name" value="ClpP/crotonase-like_dom_sf"/>
</dbReference>
<dbReference type="InterPro" id="IPR011762">
    <property type="entry name" value="COA_CT_N"/>
</dbReference>
<dbReference type="InterPro" id="IPR041010">
    <property type="entry name" value="Znf-ACC"/>
</dbReference>
<dbReference type="NCBIfam" id="TIGR00515">
    <property type="entry name" value="accD"/>
    <property type="match status" value="1"/>
</dbReference>
<dbReference type="PANTHER" id="PTHR42995">
    <property type="entry name" value="ACETYL-COENZYME A CARBOXYLASE CARBOXYL TRANSFERASE SUBUNIT BETA, CHLOROPLASTIC"/>
    <property type="match status" value="1"/>
</dbReference>
<dbReference type="PANTHER" id="PTHR42995:SF5">
    <property type="entry name" value="ACETYL-COENZYME A CARBOXYLASE CARBOXYL TRANSFERASE SUBUNIT BETA, CHLOROPLASTIC"/>
    <property type="match status" value="1"/>
</dbReference>
<dbReference type="Pfam" id="PF01039">
    <property type="entry name" value="Carboxyl_trans"/>
    <property type="match status" value="1"/>
</dbReference>
<dbReference type="Pfam" id="PF17848">
    <property type="entry name" value="Zn_ribbon_ACC"/>
    <property type="match status" value="1"/>
</dbReference>
<dbReference type="PRINTS" id="PR01070">
    <property type="entry name" value="ACCCTRFRASEB"/>
</dbReference>
<dbReference type="SUPFAM" id="SSF52096">
    <property type="entry name" value="ClpP/crotonase"/>
    <property type="match status" value="1"/>
</dbReference>
<dbReference type="PROSITE" id="PS50980">
    <property type="entry name" value="COA_CT_NTER"/>
    <property type="match status" value="1"/>
</dbReference>
<sequence>MANNEESRGLKSLFDWFANRRKAGATNPERQEREIADGLWHKCSKCGVLTYTKDLRANQMVCVECGHHNRVDSDERIRQLIDQNTWRPMDENLRATDPLQFRDRKAYSDRLREMEDKLGLLDAVKTGLGQINSSPVALAVMDFRFMGGSMGSVVGEKITRLIEQATQRRYPVVIICTSGGARMQEGMLSLMQMAKISAALERHRDARLLYIPVLTNPTTGGVTASFAMLGDIILAEPKATIGFAGRRVIEQTLREKLPDDFQTAEDLLKHGFVDDIVPRTQLKNTLSQLIALHQPVPTTPPMVLWETMSLSSTAVE</sequence>
<proteinExistence type="inferred from homology"/>
<comment type="function">
    <text evidence="1">Component of the acetyl coenzyme A carboxylase (ACC) complex. Biotin carboxylase (BC) catalyzes the carboxylation of biotin on its carrier protein (BCCP) and then the CO(2) group is transferred by the transcarboxylase to acetyl-CoA to form malonyl-CoA.</text>
</comment>
<comment type="catalytic activity">
    <reaction evidence="1">
        <text>N(6)-carboxybiotinyl-L-lysyl-[protein] + acetyl-CoA = N(6)-biotinyl-L-lysyl-[protein] + malonyl-CoA</text>
        <dbReference type="Rhea" id="RHEA:54728"/>
        <dbReference type="Rhea" id="RHEA-COMP:10505"/>
        <dbReference type="Rhea" id="RHEA-COMP:10506"/>
        <dbReference type="ChEBI" id="CHEBI:57288"/>
        <dbReference type="ChEBI" id="CHEBI:57384"/>
        <dbReference type="ChEBI" id="CHEBI:83144"/>
        <dbReference type="ChEBI" id="CHEBI:83145"/>
        <dbReference type="EC" id="2.1.3.15"/>
    </reaction>
</comment>
<comment type="cofactor">
    <cofactor evidence="1">
        <name>Zn(2+)</name>
        <dbReference type="ChEBI" id="CHEBI:29105"/>
    </cofactor>
    <text evidence="1">Binds 1 zinc ion per subunit.</text>
</comment>
<comment type="pathway">
    <text evidence="1">Lipid metabolism; malonyl-CoA biosynthesis; malonyl-CoA from acetyl-CoA: step 1/1.</text>
</comment>
<comment type="subunit">
    <text evidence="1">Acetyl-CoA carboxylase is a heterohexamer composed of biotin carboxyl carrier protein (AccB), biotin carboxylase (AccC) and two subunits each of ACCase subunit alpha (AccA) and ACCase subunit beta (AccD).</text>
</comment>
<comment type="subcellular location">
    <subcellularLocation>
        <location evidence="1">Cytoplasm</location>
    </subcellularLocation>
</comment>
<comment type="similarity">
    <text evidence="1">Belongs to the AccD/PCCB family.</text>
</comment>
<protein>
    <recommendedName>
        <fullName evidence="1">Acetyl-coenzyme A carboxylase carboxyl transferase subunit beta</fullName>
        <shortName evidence="1">ACCase subunit beta</shortName>
        <shortName evidence="1">Acetyl-CoA carboxylase carboxyltransferase subunit beta</shortName>
        <ecNumber evidence="1">2.1.3.15</ecNumber>
    </recommendedName>
</protein>
<feature type="chain" id="PRO_0000358953" description="Acetyl-coenzyme A carboxylase carboxyl transferase subunit beta">
    <location>
        <begin position="1"/>
        <end position="316"/>
    </location>
</feature>
<feature type="domain" description="CoA carboxyltransferase N-terminal" evidence="2">
    <location>
        <begin position="39"/>
        <end position="308"/>
    </location>
</feature>
<feature type="zinc finger region" description="C4-type" evidence="1">
    <location>
        <begin position="43"/>
        <end position="65"/>
    </location>
</feature>
<feature type="binding site" evidence="1">
    <location>
        <position position="43"/>
    </location>
    <ligand>
        <name>Zn(2+)</name>
        <dbReference type="ChEBI" id="CHEBI:29105"/>
    </ligand>
</feature>
<feature type="binding site" evidence="1">
    <location>
        <position position="46"/>
    </location>
    <ligand>
        <name>Zn(2+)</name>
        <dbReference type="ChEBI" id="CHEBI:29105"/>
    </ligand>
</feature>
<feature type="binding site" evidence="1">
    <location>
        <position position="62"/>
    </location>
    <ligand>
        <name>Zn(2+)</name>
        <dbReference type="ChEBI" id="CHEBI:29105"/>
    </ligand>
</feature>
<feature type="binding site" evidence="1">
    <location>
        <position position="65"/>
    </location>
    <ligand>
        <name>Zn(2+)</name>
        <dbReference type="ChEBI" id="CHEBI:29105"/>
    </ligand>
</feature>